<sequence>MLFSFFRNLCRVLYRVRVTGDTKALKGERVLITPNHVSFIDGILLALFLPVRPVFAVYTSISQQWYMRWLKSFIDFVPLDPTQPMAIKHLVRLVEQGRPVVIFPEGRITTTGSLMKIYDGAGFVAAKSGATVIPVRIEGAELTHFSRLKGLVKRRLFPQITLHILPPTQVEMPDAPRARDRRKIAGEMLHQIMMEARMAVRPRETLYESLLSAMYRFGAGKKCVEDVNFTPDSYRKLLTKTLFVGRILEKYSVEGERIGLMLPNAGISAAVIFGAIARRRIPAMMNYTAGVKGLTSAITAAEIKTIFTSRQFLDKGKLWHLPEQLTQVRWVYLEDLKADVTTADKVWIFAHLLMPRLAQVKQQPEEEALILFTSGSEGHPKGVVHSHKSILANVEQIKTIADFTTNDRFMSALPLFHSFGLTVGLFTPLLTGAEVFLYPSPLHYRIVPELVYDRSCTVLFGTSTFLGHYARFANPYDFYRLRYVVAGAEKLQESTKQLWQDKFGLRILEGYGVTECAPVVSINVPMAAKPGTVGRILPGMDARLLSVPGIEEGGRLQLKGPNIMNGYLRVEKPGVLEVPTAENIRGEMERDWYDTGDIVRFDEQGFVQIQGRAKRFAKIAGEMVSLEMVEQLALGVSPDKVHATAIKSDASKGEALVLFTTDNELTRDKLQQYAREHGVPELAVPRDIRYLKQMPLLGSGKPDFVTLKSWVDEAEQHDE</sequence>
<feature type="chain" id="PRO_1000065636" description="Bifunctional protein Aas">
    <location>
        <begin position="1"/>
        <end position="719"/>
    </location>
</feature>
<feature type="transmembrane region" description="Helical" evidence="1">
    <location>
        <begin position="258"/>
        <end position="277"/>
    </location>
</feature>
<feature type="transmembrane region" description="Helical" evidence="1">
    <location>
        <begin position="409"/>
        <end position="433"/>
    </location>
</feature>
<feature type="region of interest" description="Acyltransferase">
    <location>
        <begin position="15"/>
        <end position="138"/>
    </location>
</feature>
<feature type="region of interest" description="AMP-binding">
    <location>
        <begin position="233"/>
        <end position="646"/>
    </location>
</feature>
<feature type="active site" evidence="1">
    <location>
        <position position="36"/>
    </location>
</feature>
<comment type="function">
    <text evidence="1">Plays a role in lysophospholipid acylation. Transfers fatty acids to the 1-position via an enzyme-bound acyl-ACP intermediate in the presence of ATP and magnesium. Its physiological function is to regenerate phosphatidylethanolamine from 2-acyl-glycero-3-phosphoethanolamine (2-acyl-GPE) formed by transacylation reactions or degradation by phospholipase A1.</text>
</comment>
<comment type="catalytic activity">
    <reaction evidence="1">
        <text>a 2-acyl-sn-glycero-3-phosphoethanolamine + a fatty acyl-[ACP] = a 1,2-diacyl-sn-glycero-3-phosphoethanolamine + holo-[ACP]</text>
        <dbReference type="Rhea" id="RHEA:10304"/>
        <dbReference type="Rhea" id="RHEA-COMP:9685"/>
        <dbReference type="Rhea" id="RHEA-COMP:14125"/>
        <dbReference type="ChEBI" id="CHEBI:64479"/>
        <dbReference type="ChEBI" id="CHEBI:64612"/>
        <dbReference type="ChEBI" id="CHEBI:65213"/>
        <dbReference type="ChEBI" id="CHEBI:138651"/>
        <dbReference type="EC" id="2.3.1.40"/>
    </reaction>
</comment>
<comment type="catalytic activity">
    <reaction evidence="1">
        <text>a long-chain fatty acid + holo-[ACP] + ATP = a long-chain fatty acyl-[ACP] + AMP + diphosphate</text>
        <dbReference type="Rhea" id="RHEA:45588"/>
        <dbReference type="Rhea" id="RHEA-COMP:9685"/>
        <dbReference type="Rhea" id="RHEA-COMP:12682"/>
        <dbReference type="ChEBI" id="CHEBI:30616"/>
        <dbReference type="ChEBI" id="CHEBI:33019"/>
        <dbReference type="ChEBI" id="CHEBI:57560"/>
        <dbReference type="ChEBI" id="CHEBI:64479"/>
        <dbReference type="ChEBI" id="CHEBI:133243"/>
        <dbReference type="ChEBI" id="CHEBI:456215"/>
        <dbReference type="EC" id="6.2.1.20"/>
    </reaction>
</comment>
<comment type="subcellular location">
    <subcellularLocation>
        <location evidence="1">Cell inner membrane</location>
        <topology evidence="1">Multi-pass membrane protein</topology>
    </subcellularLocation>
</comment>
<comment type="similarity">
    <text evidence="1">In the N-terminal section; belongs to the 2-acyl-GPE acetyltransferase family.</text>
</comment>
<comment type="similarity">
    <text evidence="1">In the C-terminal section; belongs to the ATP-dependent AMP-binding enzyme family.</text>
</comment>
<reference key="1">
    <citation type="journal article" date="2007" name="J. Bacteriol.">
        <title>The genome sequence of avian pathogenic Escherichia coli strain O1:K1:H7 shares strong similarities with human extraintestinal pathogenic E. coli genomes.</title>
        <authorList>
            <person name="Johnson T.J."/>
            <person name="Kariyawasam S."/>
            <person name="Wannemuehler Y."/>
            <person name="Mangiamele P."/>
            <person name="Johnson S.J."/>
            <person name="Doetkott C."/>
            <person name="Skyberg J.A."/>
            <person name="Lynne A.M."/>
            <person name="Johnson J.R."/>
            <person name="Nolan L.K."/>
        </authorList>
    </citation>
    <scope>NUCLEOTIDE SEQUENCE [LARGE SCALE GENOMIC DNA]</scope>
</reference>
<accession>A1AF47</accession>
<keyword id="KW-0012">Acyltransferase</keyword>
<keyword id="KW-0067">ATP-binding</keyword>
<keyword id="KW-0997">Cell inner membrane</keyword>
<keyword id="KW-1003">Cell membrane</keyword>
<keyword id="KW-0436">Ligase</keyword>
<keyword id="KW-0472">Membrane</keyword>
<keyword id="KW-0511">Multifunctional enzyme</keyword>
<keyword id="KW-0547">Nucleotide-binding</keyword>
<keyword id="KW-1185">Reference proteome</keyword>
<keyword id="KW-0808">Transferase</keyword>
<keyword id="KW-0812">Transmembrane</keyword>
<keyword id="KW-1133">Transmembrane helix</keyword>
<organism>
    <name type="scientific">Escherichia coli O1:K1 / APEC</name>
    <dbReference type="NCBI Taxonomy" id="405955"/>
    <lineage>
        <taxon>Bacteria</taxon>
        <taxon>Pseudomonadati</taxon>
        <taxon>Pseudomonadota</taxon>
        <taxon>Gammaproteobacteria</taxon>
        <taxon>Enterobacterales</taxon>
        <taxon>Enterobacteriaceae</taxon>
        <taxon>Escherichia</taxon>
    </lineage>
</organism>
<gene>
    <name evidence="1" type="primary">aas</name>
    <name type="ordered locus">Ecok1_27930</name>
    <name type="ORF">APECO1_3670</name>
</gene>
<dbReference type="EC" id="2.3.1.40" evidence="1"/>
<dbReference type="EC" id="6.2.1.20" evidence="1"/>
<dbReference type="EMBL" id="CP000468">
    <property type="protein sequence ID" value="ABJ02287.1"/>
    <property type="molecule type" value="Genomic_DNA"/>
</dbReference>
<dbReference type="RefSeq" id="WP_000899024.1">
    <property type="nucleotide sequence ID" value="NZ_CADILS010000010.1"/>
</dbReference>
<dbReference type="SMR" id="A1AF47"/>
<dbReference type="KEGG" id="ecv:APECO1_3670"/>
<dbReference type="HOGENOM" id="CLU_000022_59_8_6"/>
<dbReference type="Proteomes" id="UP000008216">
    <property type="component" value="Chromosome"/>
</dbReference>
<dbReference type="GO" id="GO:0005886">
    <property type="term" value="C:plasma membrane"/>
    <property type="evidence" value="ECO:0007669"/>
    <property type="project" value="UniProtKB-SubCell"/>
</dbReference>
<dbReference type="GO" id="GO:0008779">
    <property type="term" value="F:acyl-[acyl-carrier-protein]-phospholipid O-acyltransferase activity"/>
    <property type="evidence" value="ECO:0007669"/>
    <property type="project" value="UniProtKB-UniRule"/>
</dbReference>
<dbReference type="GO" id="GO:0005524">
    <property type="term" value="F:ATP binding"/>
    <property type="evidence" value="ECO:0007669"/>
    <property type="project" value="UniProtKB-KW"/>
</dbReference>
<dbReference type="GO" id="GO:0008922">
    <property type="term" value="F:long-chain fatty acid [acyl-carrier-protein] ligase activity"/>
    <property type="evidence" value="ECO:0007669"/>
    <property type="project" value="UniProtKB-UniRule"/>
</dbReference>
<dbReference type="GO" id="GO:0031956">
    <property type="term" value="F:medium-chain fatty acid-CoA ligase activity"/>
    <property type="evidence" value="ECO:0007669"/>
    <property type="project" value="TreeGrafter"/>
</dbReference>
<dbReference type="GO" id="GO:0006631">
    <property type="term" value="P:fatty acid metabolic process"/>
    <property type="evidence" value="ECO:0007669"/>
    <property type="project" value="InterPro"/>
</dbReference>
<dbReference type="GO" id="GO:0008654">
    <property type="term" value="P:phospholipid biosynthetic process"/>
    <property type="evidence" value="ECO:0007669"/>
    <property type="project" value="InterPro"/>
</dbReference>
<dbReference type="CDD" id="cd05909">
    <property type="entry name" value="AAS_C"/>
    <property type="match status" value="1"/>
</dbReference>
<dbReference type="CDD" id="cd07989">
    <property type="entry name" value="LPLAT_AGPAT-like"/>
    <property type="match status" value="1"/>
</dbReference>
<dbReference type="FunFam" id="3.30.300.30:FF:000009">
    <property type="entry name" value="Bifunctional protein Aas"/>
    <property type="match status" value="1"/>
</dbReference>
<dbReference type="FunFam" id="3.40.50.12780:FF:000009">
    <property type="entry name" value="Bifunctional protein Aas"/>
    <property type="match status" value="1"/>
</dbReference>
<dbReference type="Gene3D" id="3.30.300.30">
    <property type="match status" value="1"/>
</dbReference>
<dbReference type="Gene3D" id="3.40.50.12780">
    <property type="entry name" value="N-terminal domain of ligase-like"/>
    <property type="match status" value="1"/>
</dbReference>
<dbReference type="HAMAP" id="MF_01162">
    <property type="entry name" value="Aas"/>
    <property type="match status" value="1"/>
</dbReference>
<dbReference type="InterPro" id="IPR023775">
    <property type="entry name" value="Aas"/>
</dbReference>
<dbReference type="InterPro" id="IPR045851">
    <property type="entry name" value="AMP-bd_C_sf"/>
</dbReference>
<dbReference type="InterPro" id="IPR020845">
    <property type="entry name" value="AMP-binding_CS"/>
</dbReference>
<dbReference type="InterPro" id="IPR000873">
    <property type="entry name" value="AMP-dep_synth/lig_dom"/>
</dbReference>
<dbReference type="InterPro" id="IPR042099">
    <property type="entry name" value="ANL_N_sf"/>
</dbReference>
<dbReference type="InterPro" id="IPR002123">
    <property type="entry name" value="Plipid/glycerol_acylTrfase"/>
</dbReference>
<dbReference type="NCBIfam" id="NF005959">
    <property type="entry name" value="PRK08043.1"/>
    <property type="match status" value="1"/>
</dbReference>
<dbReference type="PANTHER" id="PTHR43201">
    <property type="entry name" value="ACYL-COA SYNTHETASE"/>
    <property type="match status" value="1"/>
</dbReference>
<dbReference type="PANTHER" id="PTHR43201:SF8">
    <property type="entry name" value="ACYL-COA SYNTHETASE FAMILY MEMBER 3"/>
    <property type="match status" value="1"/>
</dbReference>
<dbReference type="Pfam" id="PF01553">
    <property type="entry name" value="Acyltransferase"/>
    <property type="match status" value="1"/>
</dbReference>
<dbReference type="Pfam" id="PF00501">
    <property type="entry name" value="AMP-binding"/>
    <property type="match status" value="1"/>
</dbReference>
<dbReference type="SMART" id="SM00563">
    <property type="entry name" value="PlsC"/>
    <property type="match status" value="1"/>
</dbReference>
<dbReference type="SUPFAM" id="SSF56801">
    <property type="entry name" value="Acetyl-CoA synthetase-like"/>
    <property type="match status" value="1"/>
</dbReference>
<dbReference type="SUPFAM" id="SSF69593">
    <property type="entry name" value="Glycerol-3-phosphate (1)-acyltransferase"/>
    <property type="match status" value="1"/>
</dbReference>
<dbReference type="PROSITE" id="PS00455">
    <property type="entry name" value="AMP_BINDING"/>
    <property type="match status" value="1"/>
</dbReference>
<name>AAS_ECOK1</name>
<evidence type="ECO:0000255" key="1">
    <source>
        <dbReference type="HAMAP-Rule" id="MF_01162"/>
    </source>
</evidence>
<protein>
    <recommendedName>
        <fullName evidence="1">Bifunctional protein Aas</fullName>
    </recommendedName>
    <domain>
        <recommendedName>
            <fullName evidence="1">2-acylglycerophosphoethanolamine acyltransferase</fullName>
            <ecNumber evidence="1">2.3.1.40</ecNumber>
        </recommendedName>
        <alternativeName>
            <fullName evidence="1">2-acyl-GPE acyltransferase</fullName>
        </alternativeName>
        <alternativeName>
            <fullName evidence="1">Acyl-[acyl-carrier-protein]--phospholipid O-acyltransferase</fullName>
        </alternativeName>
    </domain>
    <domain>
        <recommendedName>
            <fullName evidence="1">Acyl-[acyl-carrier-protein] synthetase</fullName>
            <ecNumber evidence="1">6.2.1.20</ecNumber>
        </recommendedName>
        <alternativeName>
            <fullName evidence="1">Acyl-ACP synthetase</fullName>
        </alternativeName>
        <alternativeName>
            <fullName evidence="1">Long-chain-fatty-acid--[acyl-carrier-protein] ligase</fullName>
        </alternativeName>
    </domain>
</protein>
<proteinExistence type="inferred from homology"/>